<gene>
    <name type="ordered locus">jk2011</name>
</gene>
<name>Y2011_CORJK</name>
<proteinExistence type="inferred from homology"/>
<reference key="1">
    <citation type="journal article" date="2005" name="J. Bacteriol.">
        <title>Complete genome sequence and analysis of the multiresistant nosocomial pathogen Corynebacterium jeikeium K411, a lipid-requiring bacterium of the human skin flora.</title>
        <authorList>
            <person name="Tauch A."/>
            <person name="Kaiser O."/>
            <person name="Hain T."/>
            <person name="Goesmann A."/>
            <person name="Weisshaar B."/>
            <person name="Albersmeier A."/>
            <person name="Bekel T."/>
            <person name="Bischoff N."/>
            <person name="Brune I."/>
            <person name="Chakraborty T."/>
            <person name="Kalinowski J."/>
            <person name="Meyer F."/>
            <person name="Rupp O."/>
            <person name="Schneiker S."/>
            <person name="Viehoever P."/>
            <person name="Puehler A."/>
        </authorList>
    </citation>
    <scope>NUCLEOTIDE SEQUENCE [LARGE SCALE GENOMIC DNA]</scope>
    <source>
        <strain>K411</strain>
    </source>
</reference>
<organism>
    <name type="scientific">Corynebacterium jeikeium (strain K411)</name>
    <dbReference type="NCBI Taxonomy" id="306537"/>
    <lineage>
        <taxon>Bacteria</taxon>
        <taxon>Bacillati</taxon>
        <taxon>Actinomycetota</taxon>
        <taxon>Actinomycetes</taxon>
        <taxon>Mycobacteriales</taxon>
        <taxon>Corynebacteriaceae</taxon>
        <taxon>Corynebacterium</taxon>
    </lineage>
</organism>
<comment type="function">
    <text evidence="1">Binds to DNA and alters its conformation. May be involved in regulation of gene expression, nucleoid organization and DNA protection.</text>
</comment>
<comment type="subunit">
    <text evidence="1">Homodimer.</text>
</comment>
<comment type="subcellular location">
    <subcellularLocation>
        <location evidence="1">Cytoplasm</location>
        <location evidence="1">Nucleoid</location>
    </subcellularLocation>
</comment>
<comment type="similarity">
    <text evidence="1">Belongs to the YbaB/EbfC family.</text>
</comment>
<dbReference type="EMBL" id="CR931997">
    <property type="protein sequence ID" value="CAI38193.1"/>
    <property type="molecule type" value="Genomic_DNA"/>
</dbReference>
<dbReference type="RefSeq" id="WP_005292353.1">
    <property type="nucleotide sequence ID" value="NC_007164.1"/>
</dbReference>
<dbReference type="SMR" id="Q4JSL4"/>
<dbReference type="STRING" id="306537.jk2011"/>
<dbReference type="GeneID" id="92739640"/>
<dbReference type="KEGG" id="cjk:jk2011"/>
<dbReference type="eggNOG" id="COG0718">
    <property type="taxonomic scope" value="Bacteria"/>
</dbReference>
<dbReference type="HOGENOM" id="CLU_140930_4_0_11"/>
<dbReference type="OrthoDB" id="9809370at2"/>
<dbReference type="Proteomes" id="UP000000545">
    <property type="component" value="Chromosome"/>
</dbReference>
<dbReference type="GO" id="GO:0043590">
    <property type="term" value="C:bacterial nucleoid"/>
    <property type="evidence" value="ECO:0007669"/>
    <property type="project" value="UniProtKB-UniRule"/>
</dbReference>
<dbReference type="GO" id="GO:0005829">
    <property type="term" value="C:cytosol"/>
    <property type="evidence" value="ECO:0007669"/>
    <property type="project" value="TreeGrafter"/>
</dbReference>
<dbReference type="GO" id="GO:0003677">
    <property type="term" value="F:DNA binding"/>
    <property type="evidence" value="ECO:0007669"/>
    <property type="project" value="UniProtKB-UniRule"/>
</dbReference>
<dbReference type="Gene3D" id="3.30.1310.10">
    <property type="entry name" value="Nucleoid-associated protein YbaB-like domain"/>
    <property type="match status" value="1"/>
</dbReference>
<dbReference type="HAMAP" id="MF_00274">
    <property type="entry name" value="DNA_YbaB_EbfC"/>
    <property type="match status" value="1"/>
</dbReference>
<dbReference type="InterPro" id="IPR036894">
    <property type="entry name" value="YbaB-like_sf"/>
</dbReference>
<dbReference type="InterPro" id="IPR004401">
    <property type="entry name" value="YbaB/EbfC"/>
</dbReference>
<dbReference type="NCBIfam" id="TIGR00103">
    <property type="entry name" value="DNA_YbaB_EbfC"/>
    <property type="match status" value="1"/>
</dbReference>
<dbReference type="PANTHER" id="PTHR33449">
    <property type="entry name" value="NUCLEOID-ASSOCIATED PROTEIN YBAB"/>
    <property type="match status" value="1"/>
</dbReference>
<dbReference type="PANTHER" id="PTHR33449:SF1">
    <property type="entry name" value="NUCLEOID-ASSOCIATED PROTEIN YBAB"/>
    <property type="match status" value="1"/>
</dbReference>
<dbReference type="Pfam" id="PF02575">
    <property type="entry name" value="YbaB_DNA_bd"/>
    <property type="match status" value="1"/>
</dbReference>
<dbReference type="PIRSF" id="PIRSF004555">
    <property type="entry name" value="UCP004555"/>
    <property type="match status" value="1"/>
</dbReference>
<dbReference type="SUPFAM" id="SSF82607">
    <property type="entry name" value="YbaB-like"/>
    <property type="match status" value="1"/>
</dbReference>
<keyword id="KW-0963">Cytoplasm</keyword>
<keyword id="KW-0238">DNA-binding</keyword>
<keyword id="KW-1185">Reference proteome</keyword>
<feature type="chain" id="PRO_1000003735" description="Nucleoid-associated protein jk2011">
    <location>
        <begin position="1"/>
        <end position="104"/>
    </location>
</feature>
<evidence type="ECO:0000255" key="1">
    <source>
        <dbReference type="HAMAP-Rule" id="MF_00274"/>
    </source>
</evidence>
<accession>Q4JSL4</accession>
<protein>
    <recommendedName>
        <fullName evidence="1">Nucleoid-associated protein jk2011</fullName>
    </recommendedName>
</protein>
<sequence>MSQPDMNQLMQQAQQMQAQLQEAQREIAASTVKGEAGNGLVTISVAGSGEVTDMEIDPKIVDPEDIDTLKDLLLGAFKDANQKLQTLAEEKMGPLSQGMSGLGF</sequence>